<reference key="1">
    <citation type="journal article" date="2005" name="Nucleic Acids Res.">
        <title>The genome sequence of Salmonella enterica serovar Choleraesuis, a highly invasive and resistant zoonotic pathogen.</title>
        <authorList>
            <person name="Chiu C.-H."/>
            <person name="Tang P."/>
            <person name="Chu C."/>
            <person name="Hu S."/>
            <person name="Bao Q."/>
            <person name="Yu J."/>
            <person name="Chou Y.-Y."/>
            <person name="Wang H.-S."/>
            <person name="Lee Y.-S."/>
        </authorList>
    </citation>
    <scope>NUCLEOTIDE SEQUENCE [LARGE SCALE GENOMIC DNA]</scope>
    <source>
        <strain>SC-B67</strain>
    </source>
</reference>
<organism>
    <name type="scientific">Salmonella choleraesuis (strain SC-B67)</name>
    <dbReference type="NCBI Taxonomy" id="321314"/>
    <lineage>
        <taxon>Bacteria</taxon>
        <taxon>Pseudomonadati</taxon>
        <taxon>Pseudomonadota</taxon>
        <taxon>Gammaproteobacteria</taxon>
        <taxon>Enterobacterales</taxon>
        <taxon>Enterobacteriaceae</taxon>
        <taxon>Salmonella</taxon>
    </lineage>
</organism>
<protein>
    <recommendedName>
        <fullName evidence="1">Glycine--tRNA ligase alpha subunit</fullName>
        <ecNumber evidence="1">6.1.1.14</ecNumber>
    </recommendedName>
    <alternativeName>
        <fullName evidence="1">Glycyl-tRNA synthetase alpha subunit</fullName>
        <shortName evidence="1">GlyRS</shortName>
    </alternativeName>
</protein>
<name>SYGA_SALCH</name>
<feature type="chain" id="PRO_1000047480" description="Glycine--tRNA ligase alpha subunit">
    <location>
        <begin position="1"/>
        <end position="303"/>
    </location>
</feature>
<sequence>MQKFDTRTFQGLILTLQDYWARQGCTIVQPLDMEVGAGTSHPMTCLRALGPEPMATAYVQPSRRPTDGRYGENPNRLQHYYQFQVVIKPSPDNIQELYLGSLKELGMDPTIHDIRFVEDNWENPTLGAWGLGWEVWLNGMEVTQFTYFQQVGGLECKPVTGEITYGLERLAMYIQGVDSVYDLVWSDGPLGKTTYGDVFHQNEVEQSTYNFEYADVDFLFTCFEQYEKEAQQLLALENPLPLPAYERILKAAHSFNLLDARKAISVTERQRYILRIRTLTKAVAEAYYASREALGFPMCNKDK</sequence>
<comment type="catalytic activity">
    <reaction evidence="1">
        <text>tRNA(Gly) + glycine + ATP = glycyl-tRNA(Gly) + AMP + diphosphate</text>
        <dbReference type="Rhea" id="RHEA:16013"/>
        <dbReference type="Rhea" id="RHEA-COMP:9664"/>
        <dbReference type="Rhea" id="RHEA-COMP:9683"/>
        <dbReference type="ChEBI" id="CHEBI:30616"/>
        <dbReference type="ChEBI" id="CHEBI:33019"/>
        <dbReference type="ChEBI" id="CHEBI:57305"/>
        <dbReference type="ChEBI" id="CHEBI:78442"/>
        <dbReference type="ChEBI" id="CHEBI:78522"/>
        <dbReference type="ChEBI" id="CHEBI:456215"/>
        <dbReference type="EC" id="6.1.1.14"/>
    </reaction>
</comment>
<comment type="subunit">
    <text evidence="1">Tetramer of two alpha and two beta subunits.</text>
</comment>
<comment type="subcellular location">
    <subcellularLocation>
        <location evidence="1">Cytoplasm</location>
    </subcellularLocation>
</comment>
<comment type="similarity">
    <text evidence="1">Belongs to the class-II aminoacyl-tRNA synthetase family.</text>
</comment>
<dbReference type="EC" id="6.1.1.14" evidence="1"/>
<dbReference type="EMBL" id="AE017220">
    <property type="protein sequence ID" value="AAX67497.1"/>
    <property type="molecule type" value="Genomic_DNA"/>
</dbReference>
<dbReference type="RefSeq" id="WP_001168551.1">
    <property type="nucleotide sequence ID" value="NC_006905.1"/>
</dbReference>
<dbReference type="SMR" id="Q57IG5"/>
<dbReference type="GeneID" id="89546728"/>
<dbReference type="KEGG" id="sec:SCH_3591"/>
<dbReference type="HOGENOM" id="CLU_057066_1_0_6"/>
<dbReference type="Proteomes" id="UP000000538">
    <property type="component" value="Chromosome"/>
</dbReference>
<dbReference type="GO" id="GO:0005829">
    <property type="term" value="C:cytosol"/>
    <property type="evidence" value="ECO:0007669"/>
    <property type="project" value="TreeGrafter"/>
</dbReference>
<dbReference type="GO" id="GO:0005524">
    <property type="term" value="F:ATP binding"/>
    <property type="evidence" value="ECO:0007669"/>
    <property type="project" value="UniProtKB-UniRule"/>
</dbReference>
<dbReference type="GO" id="GO:0004820">
    <property type="term" value="F:glycine-tRNA ligase activity"/>
    <property type="evidence" value="ECO:0007669"/>
    <property type="project" value="UniProtKB-UniRule"/>
</dbReference>
<dbReference type="GO" id="GO:0006426">
    <property type="term" value="P:glycyl-tRNA aminoacylation"/>
    <property type="evidence" value="ECO:0007669"/>
    <property type="project" value="UniProtKB-UniRule"/>
</dbReference>
<dbReference type="CDD" id="cd00733">
    <property type="entry name" value="GlyRS_alpha_core"/>
    <property type="match status" value="1"/>
</dbReference>
<dbReference type="FunFam" id="1.20.58.180:FF:000001">
    <property type="entry name" value="Glycine--tRNA ligase alpha subunit"/>
    <property type="match status" value="1"/>
</dbReference>
<dbReference type="FunFam" id="3.30.930.10:FF:000006">
    <property type="entry name" value="Glycine--tRNA ligase alpha subunit"/>
    <property type="match status" value="1"/>
</dbReference>
<dbReference type="Gene3D" id="3.30.930.10">
    <property type="entry name" value="Bira Bifunctional Protein, Domain 2"/>
    <property type="match status" value="1"/>
</dbReference>
<dbReference type="Gene3D" id="1.20.58.180">
    <property type="entry name" value="Class II aaRS and biotin synthetases, domain 2"/>
    <property type="match status" value="1"/>
</dbReference>
<dbReference type="HAMAP" id="MF_00254">
    <property type="entry name" value="Gly_tRNA_synth_alpha"/>
    <property type="match status" value="1"/>
</dbReference>
<dbReference type="InterPro" id="IPR045864">
    <property type="entry name" value="aa-tRNA-synth_II/BPL/LPL"/>
</dbReference>
<dbReference type="InterPro" id="IPR006194">
    <property type="entry name" value="Gly-tRNA-synth_heterodimer"/>
</dbReference>
<dbReference type="InterPro" id="IPR002310">
    <property type="entry name" value="Gly-tRNA_ligase_asu"/>
</dbReference>
<dbReference type="NCBIfam" id="TIGR00388">
    <property type="entry name" value="glyQ"/>
    <property type="match status" value="1"/>
</dbReference>
<dbReference type="NCBIfam" id="NF006827">
    <property type="entry name" value="PRK09348.1"/>
    <property type="match status" value="1"/>
</dbReference>
<dbReference type="PANTHER" id="PTHR30075:SF2">
    <property type="entry name" value="GLYCINE--TRNA LIGASE, CHLOROPLASTIC_MITOCHONDRIAL 2"/>
    <property type="match status" value="1"/>
</dbReference>
<dbReference type="PANTHER" id="PTHR30075">
    <property type="entry name" value="GLYCYL-TRNA SYNTHETASE"/>
    <property type="match status" value="1"/>
</dbReference>
<dbReference type="Pfam" id="PF02091">
    <property type="entry name" value="tRNA-synt_2e"/>
    <property type="match status" value="1"/>
</dbReference>
<dbReference type="PRINTS" id="PR01044">
    <property type="entry name" value="TRNASYNTHGA"/>
</dbReference>
<dbReference type="SUPFAM" id="SSF55681">
    <property type="entry name" value="Class II aaRS and biotin synthetases"/>
    <property type="match status" value="1"/>
</dbReference>
<dbReference type="PROSITE" id="PS50861">
    <property type="entry name" value="AA_TRNA_LIGASE_II_GLYAB"/>
    <property type="match status" value="1"/>
</dbReference>
<keyword id="KW-0030">Aminoacyl-tRNA synthetase</keyword>
<keyword id="KW-0067">ATP-binding</keyword>
<keyword id="KW-0963">Cytoplasm</keyword>
<keyword id="KW-0436">Ligase</keyword>
<keyword id="KW-0547">Nucleotide-binding</keyword>
<keyword id="KW-0648">Protein biosynthesis</keyword>
<gene>
    <name evidence="1" type="primary">glyQ</name>
    <name type="ordered locus">SCH_3591</name>
</gene>
<evidence type="ECO:0000255" key="1">
    <source>
        <dbReference type="HAMAP-Rule" id="MF_00254"/>
    </source>
</evidence>
<proteinExistence type="inferred from homology"/>
<accession>Q57IG5</accession>